<keyword id="KW-0238">DNA-binding</keyword>
<keyword id="KW-0341">Growth regulation</keyword>
<keyword id="KW-0539">Nucleus</keyword>
<keyword id="KW-1185">Reference proteome</keyword>
<keyword id="KW-0678">Repressor</keyword>
<keyword id="KW-0804">Transcription</keyword>
<keyword id="KW-0805">Transcription regulation</keyword>
<organism>
    <name type="scientific">Oryza sativa subsp. japonica</name>
    <name type="common">Rice</name>
    <dbReference type="NCBI Taxonomy" id="39947"/>
    <lineage>
        <taxon>Eukaryota</taxon>
        <taxon>Viridiplantae</taxon>
        <taxon>Streptophyta</taxon>
        <taxon>Embryophyta</taxon>
        <taxon>Tracheophyta</taxon>
        <taxon>Spermatophyta</taxon>
        <taxon>Magnoliopsida</taxon>
        <taxon>Liliopsida</taxon>
        <taxon>Poales</taxon>
        <taxon>Poaceae</taxon>
        <taxon>BOP clade</taxon>
        <taxon>Oryzoideae</taxon>
        <taxon>Oryzeae</taxon>
        <taxon>Oryzinae</taxon>
        <taxon>Oryza</taxon>
        <taxon>Oryza sativa</taxon>
    </lineage>
</organism>
<accession>Q6Z6W2</accession>
<accession>Q0DXV6</accession>
<accession>Q84NB9</accession>
<accession>Q84P85</accession>
<proteinExistence type="evidence at protein level"/>
<reference key="1">
    <citation type="journal article" date="2003" name="Plant Cell Physiol.">
        <title>Systematic reverse genetic screening of T-DNA tagged genes in rice for functional genomic analyses: MADS-box genes as a test case.</title>
        <authorList>
            <person name="Lee S."/>
            <person name="Kim J."/>
            <person name="Son J.-S."/>
            <person name="Nam J."/>
            <person name="Jeong D.-H."/>
            <person name="Lee K."/>
            <person name="Jang S."/>
            <person name="Yoo J."/>
            <person name="Lee J."/>
            <person name="Lee D.-Y."/>
            <person name="Kang H.-G."/>
            <person name="An G."/>
        </authorList>
    </citation>
    <scope>NUCLEOTIDE SEQUENCE [MRNA]</scope>
    <scope>TISSUE SPECIFICITY</scope>
    <source>
        <strain>cv. Dongjin</strain>
    </source>
</reference>
<reference key="2">
    <citation type="journal article" date="2003" name="Proc. Natl. Acad. Sci. U.S.A.">
        <title>A network of rice genes associated with stress response and seed development.</title>
        <authorList>
            <person name="Cooper B."/>
            <person name="Clarke J.D."/>
            <person name="Budworth P."/>
            <person name="Kreps J."/>
            <person name="Hutchison D."/>
            <person name="Park S."/>
            <person name="Guimil S."/>
            <person name="Dunn M."/>
            <person name="Luginbuehl P."/>
            <person name="Ellero C."/>
            <person name="Goff S.A."/>
            <person name="Glazebrook J."/>
        </authorList>
    </citation>
    <scope>NUCLEOTIDE SEQUENCE [MRNA]</scope>
    <source>
        <strain>cv. Nipponbare</strain>
    </source>
</reference>
<reference key="3">
    <citation type="journal article" date="2005" name="Nature">
        <title>The map-based sequence of the rice genome.</title>
        <authorList>
            <consortium name="International rice genome sequencing project (IRGSP)"/>
        </authorList>
    </citation>
    <scope>NUCLEOTIDE SEQUENCE [LARGE SCALE GENOMIC DNA]</scope>
    <source>
        <strain>cv. Nipponbare</strain>
    </source>
</reference>
<reference key="4">
    <citation type="journal article" date="2008" name="Nucleic Acids Res.">
        <title>The rice annotation project database (RAP-DB): 2008 update.</title>
        <authorList>
            <consortium name="The rice annotation project (RAP)"/>
        </authorList>
    </citation>
    <scope>GENOME REANNOTATION</scope>
    <source>
        <strain>cv. Nipponbare</strain>
    </source>
</reference>
<reference key="5">
    <citation type="journal article" date="2013" name="Rice">
        <title>Improvement of the Oryza sativa Nipponbare reference genome using next generation sequence and optical map data.</title>
        <authorList>
            <person name="Kawahara Y."/>
            <person name="de la Bastide M."/>
            <person name="Hamilton J.P."/>
            <person name="Kanamori H."/>
            <person name="McCombie W.R."/>
            <person name="Ouyang S."/>
            <person name="Schwartz D.C."/>
            <person name="Tanaka T."/>
            <person name="Wu J."/>
            <person name="Zhou S."/>
            <person name="Childs K.L."/>
            <person name="Davidson R.M."/>
            <person name="Lin H."/>
            <person name="Quesada-Ocampo L."/>
            <person name="Vaillancourt B."/>
            <person name="Sakai H."/>
            <person name="Lee S.S."/>
            <person name="Kim J."/>
            <person name="Numa H."/>
            <person name="Itoh T."/>
            <person name="Buell C.R."/>
            <person name="Matsumoto T."/>
        </authorList>
    </citation>
    <scope>GENOME REANNOTATION</scope>
    <source>
        <strain>cv. Nipponbare</strain>
    </source>
</reference>
<reference key="6">
    <citation type="journal article" date="2005" name="PLoS Biol.">
        <title>The genomes of Oryza sativa: a history of duplications.</title>
        <authorList>
            <person name="Yu J."/>
            <person name="Wang J."/>
            <person name="Lin W."/>
            <person name="Li S."/>
            <person name="Li H."/>
            <person name="Zhou J."/>
            <person name="Ni P."/>
            <person name="Dong W."/>
            <person name="Hu S."/>
            <person name="Zeng C."/>
            <person name="Zhang J."/>
            <person name="Zhang Y."/>
            <person name="Li R."/>
            <person name="Xu Z."/>
            <person name="Li S."/>
            <person name="Li X."/>
            <person name="Zheng H."/>
            <person name="Cong L."/>
            <person name="Lin L."/>
            <person name="Yin J."/>
            <person name="Geng J."/>
            <person name="Li G."/>
            <person name="Shi J."/>
            <person name="Liu J."/>
            <person name="Lv H."/>
            <person name="Li J."/>
            <person name="Wang J."/>
            <person name="Deng Y."/>
            <person name="Ran L."/>
            <person name="Shi X."/>
            <person name="Wang X."/>
            <person name="Wu Q."/>
            <person name="Li C."/>
            <person name="Ren X."/>
            <person name="Wang J."/>
            <person name="Wang X."/>
            <person name="Li D."/>
            <person name="Liu D."/>
            <person name="Zhang X."/>
            <person name="Ji Z."/>
            <person name="Zhao W."/>
            <person name="Sun Y."/>
            <person name="Zhang Z."/>
            <person name="Bao J."/>
            <person name="Han Y."/>
            <person name="Dong L."/>
            <person name="Ji J."/>
            <person name="Chen P."/>
            <person name="Wu S."/>
            <person name="Liu J."/>
            <person name="Xiao Y."/>
            <person name="Bu D."/>
            <person name="Tan J."/>
            <person name="Yang L."/>
            <person name="Ye C."/>
            <person name="Zhang J."/>
            <person name="Xu J."/>
            <person name="Zhou Y."/>
            <person name="Yu Y."/>
            <person name="Zhang B."/>
            <person name="Zhuang S."/>
            <person name="Wei H."/>
            <person name="Liu B."/>
            <person name="Lei M."/>
            <person name="Yu H."/>
            <person name="Li Y."/>
            <person name="Xu H."/>
            <person name="Wei S."/>
            <person name="He X."/>
            <person name="Fang L."/>
            <person name="Zhang Z."/>
            <person name="Zhang Y."/>
            <person name="Huang X."/>
            <person name="Su Z."/>
            <person name="Tong W."/>
            <person name="Li J."/>
            <person name="Tong Z."/>
            <person name="Li S."/>
            <person name="Ye J."/>
            <person name="Wang L."/>
            <person name="Fang L."/>
            <person name="Lei T."/>
            <person name="Chen C.-S."/>
            <person name="Chen H.-C."/>
            <person name="Xu Z."/>
            <person name="Li H."/>
            <person name="Huang H."/>
            <person name="Zhang F."/>
            <person name="Xu H."/>
            <person name="Li N."/>
            <person name="Zhao C."/>
            <person name="Li S."/>
            <person name="Dong L."/>
            <person name="Huang Y."/>
            <person name="Li L."/>
            <person name="Xi Y."/>
            <person name="Qi Q."/>
            <person name="Li W."/>
            <person name="Zhang B."/>
            <person name="Hu W."/>
            <person name="Zhang Y."/>
            <person name="Tian X."/>
            <person name="Jiao Y."/>
            <person name="Liang X."/>
            <person name="Jin J."/>
            <person name="Gao L."/>
            <person name="Zheng W."/>
            <person name="Hao B."/>
            <person name="Liu S.-M."/>
            <person name="Wang W."/>
            <person name="Yuan L."/>
            <person name="Cao M."/>
            <person name="McDermott J."/>
            <person name="Samudrala R."/>
            <person name="Wang J."/>
            <person name="Wong G.K.-S."/>
            <person name="Yang H."/>
        </authorList>
    </citation>
    <scope>NUCLEOTIDE SEQUENCE [LARGE SCALE GENOMIC DNA]</scope>
    <source>
        <strain>cv. Nipponbare</strain>
    </source>
</reference>
<reference key="7">
    <citation type="submission" date="2006-10" db="EMBL/GenBank/DDBJ databases">
        <title>Oryza sativa full length cDNA.</title>
        <authorList>
            <consortium name="The rice full-length cDNA consortium"/>
        </authorList>
    </citation>
    <scope>NUCLEOTIDE SEQUENCE [LARGE SCALE MRNA]</scope>
    <source>
        <strain>cv. Nipponbare</strain>
    </source>
</reference>
<reference key="8">
    <citation type="journal article" date="2013" name="Nat. Commun.">
        <title>The interaction between OsMADS57 and OsTB1 modulates rice tillering via DWARF14.</title>
        <authorList>
            <person name="Guo S."/>
            <person name="Xu Y."/>
            <person name="Liu H."/>
            <person name="Mao Z."/>
            <person name="Zhang C."/>
            <person name="Ma Y."/>
            <person name="Zhang Q."/>
            <person name="Meng Z."/>
            <person name="Chong K."/>
        </authorList>
    </citation>
    <scope>FUNCTION</scope>
    <scope>INTERACTION WITH TB1</scope>
    <scope>SUBCELLULAR LOCATION</scope>
    <scope>TISSUE SPECIFICITY</scope>
    <scope>DISRUPTION PHENOTYPE</scope>
</reference>
<sequence>MGRGKIVIRRIDNSTSRQVTFSKRRNGLLKKAKELSILCDAEVGLVVFSSTGRLYEFSSTNMKTVIDRYTNAKEELLGGNATSEIKIWQREAASLRQQLHNLQESHKQLMGEELSGLGVRDLQGLENRLEISLRNIRMRKDNLLKSEIEELHVKGSLIHQENIELSRSLNVMSQQKLELYNKLQACEQRGATDANESSSTPYSFRIIQNANMPPSLELSQSQQREGECSKTAAPELGLHLP</sequence>
<feature type="chain" id="PRO_0000229919" description="MADS-box transcription factor 57">
    <location>
        <begin position="1"/>
        <end position="241"/>
    </location>
</feature>
<feature type="domain" description="MADS-box" evidence="1">
    <location>
        <begin position="1"/>
        <end position="61"/>
    </location>
</feature>
<feature type="domain" description="K-box" evidence="2">
    <location>
        <begin position="85"/>
        <end position="178"/>
    </location>
</feature>
<feature type="region of interest" description="Disordered" evidence="3">
    <location>
        <begin position="216"/>
        <end position="241"/>
    </location>
</feature>
<evidence type="ECO:0000255" key="1">
    <source>
        <dbReference type="PROSITE-ProRule" id="PRU00251"/>
    </source>
</evidence>
<evidence type="ECO:0000255" key="2">
    <source>
        <dbReference type="PROSITE-ProRule" id="PRU00629"/>
    </source>
</evidence>
<evidence type="ECO:0000256" key="3">
    <source>
        <dbReference type="SAM" id="MobiDB-lite"/>
    </source>
</evidence>
<evidence type="ECO:0000269" key="4">
    <source>
    </source>
</evidence>
<evidence type="ECO:0000269" key="5">
    <source>
    </source>
</evidence>
<evidence type="ECO:0000303" key="6">
    <source>
    </source>
</evidence>
<evidence type="ECO:0000305" key="7"/>
<evidence type="ECO:0000312" key="8">
    <source>
        <dbReference type="EMBL" id="BAD15933.1"/>
    </source>
</evidence>
<evidence type="ECO:0000312" key="9">
    <source>
        <dbReference type="EMBL" id="BAS80753.1"/>
    </source>
</evidence>
<evidence type="ECO:0000312" key="10">
    <source>
        <dbReference type="EMBL" id="EEE57746.1"/>
    </source>
</evidence>
<name>MAD57_ORYSJ</name>
<gene>
    <name evidence="6" type="primary">MADS57</name>
    <name evidence="9" type="ordered locus">Os02g0731200</name>
    <name evidence="7" type="ordered locus">LOC_Os02g49840</name>
    <name evidence="10" type="ORF">OsJ_08264</name>
    <name evidence="8" type="ORF">P0617A09.25</name>
</gene>
<dbReference type="EMBL" id="AY177702">
    <property type="protein sequence ID" value="AAO47712.1"/>
    <property type="molecule type" value="mRNA"/>
</dbReference>
<dbReference type="EMBL" id="AY224482">
    <property type="protein sequence ID" value="AAO72601.1"/>
    <property type="molecule type" value="mRNA"/>
</dbReference>
<dbReference type="EMBL" id="AP004888">
    <property type="protein sequence ID" value="BAD15933.1"/>
    <property type="status" value="ALT_SEQ"/>
    <property type="molecule type" value="Genomic_DNA"/>
</dbReference>
<dbReference type="EMBL" id="AP008208">
    <property type="protein sequence ID" value="BAF09932.1"/>
    <property type="molecule type" value="Genomic_DNA"/>
</dbReference>
<dbReference type="EMBL" id="AP014958">
    <property type="protein sequence ID" value="BAS80753.1"/>
    <property type="molecule type" value="Genomic_DNA"/>
</dbReference>
<dbReference type="EMBL" id="CM000139">
    <property type="protein sequence ID" value="EEE57746.1"/>
    <property type="molecule type" value="Genomic_DNA"/>
</dbReference>
<dbReference type="EMBL" id="AK241644">
    <property type="protein sequence ID" value="BAH01078.1"/>
    <property type="molecule type" value="mRNA"/>
</dbReference>
<dbReference type="RefSeq" id="XP_015626795.1">
    <property type="nucleotide sequence ID" value="XM_015771309.1"/>
</dbReference>
<dbReference type="SMR" id="Q6Z6W2"/>
<dbReference type="FunCoup" id="Q6Z6W2">
    <property type="interactions" value="41"/>
</dbReference>
<dbReference type="IntAct" id="Q6Z6W2">
    <property type="interactions" value="1"/>
</dbReference>
<dbReference type="STRING" id="39947.Q6Z6W2"/>
<dbReference type="PaxDb" id="39947-Q6Z6W2"/>
<dbReference type="EnsemblPlants" id="Os02t0731200-01">
    <property type="protein sequence ID" value="Os02t0731200-01"/>
    <property type="gene ID" value="Os02g0731200"/>
</dbReference>
<dbReference type="Gramene" id="Os02t0731200-01">
    <property type="protein sequence ID" value="Os02t0731200-01"/>
    <property type="gene ID" value="Os02g0731200"/>
</dbReference>
<dbReference type="KEGG" id="dosa:Os02g0731200"/>
<dbReference type="eggNOG" id="KOG0014">
    <property type="taxonomic scope" value="Eukaryota"/>
</dbReference>
<dbReference type="HOGENOM" id="CLU_053053_2_0_1"/>
<dbReference type="InParanoid" id="Q6Z6W2"/>
<dbReference type="OMA" id="EIKFWQN"/>
<dbReference type="OrthoDB" id="1898716at2759"/>
<dbReference type="Proteomes" id="UP000000763">
    <property type="component" value="Chromosome 2"/>
</dbReference>
<dbReference type="Proteomes" id="UP000007752">
    <property type="component" value="Chromosome 2"/>
</dbReference>
<dbReference type="Proteomes" id="UP000059680">
    <property type="component" value="Chromosome 2"/>
</dbReference>
<dbReference type="GO" id="GO:0005634">
    <property type="term" value="C:nucleus"/>
    <property type="evidence" value="ECO:0007669"/>
    <property type="project" value="UniProtKB-SubCell"/>
</dbReference>
<dbReference type="GO" id="GO:0000981">
    <property type="term" value="F:DNA-binding transcription factor activity, RNA polymerase II-specific"/>
    <property type="evidence" value="ECO:0000318"/>
    <property type="project" value="GO_Central"/>
</dbReference>
<dbReference type="GO" id="GO:0046983">
    <property type="term" value="F:protein dimerization activity"/>
    <property type="evidence" value="ECO:0007669"/>
    <property type="project" value="InterPro"/>
</dbReference>
<dbReference type="GO" id="GO:0000978">
    <property type="term" value="F:RNA polymerase II cis-regulatory region sequence-specific DNA binding"/>
    <property type="evidence" value="ECO:0000318"/>
    <property type="project" value="GO_Central"/>
</dbReference>
<dbReference type="GO" id="GO:0045944">
    <property type="term" value="P:positive regulation of transcription by RNA polymerase II"/>
    <property type="evidence" value="ECO:0007669"/>
    <property type="project" value="InterPro"/>
</dbReference>
<dbReference type="GO" id="GO:0006357">
    <property type="term" value="P:regulation of transcription by RNA polymerase II"/>
    <property type="evidence" value="ECO:0000318"/>
    <property type="project" value="GO_Central"/>
</dbReference>
<dbReference type="CDD" id="cd00265">
    <property type="entry name" value="MADS_MEF2_like"/>
    <property type="match status" value="1"/>
</dbReference>
<dbReference type="FunFam" id="3.40.1810.10:FF:000003">
    <property type="entry name" value="MADS-box transcription factor MADS-MC"/>
    <property type="match status" value="1"/>
</dbReference>
<dbReference type="Gene3D" id="3.40.1810.10">
    <property type="entry name" value="Transcription factor, MADS-box"/>
    <property type="match status" value="1"/>
</dbReference>
<dbReference type="InterPro" id="IPR050142">
    <property type="entry name" value="MADS-box/MEF2_TF"/>
</dbReference>
<dbReference type="InterPro" id="IPR033896">
    <property type="entry name" value="MEF2-like_N"/>
</dbReference>
<dbReference type="InterPro" id="IPR002487">
    <property type="entry name" value="TF_Kbox"/>
</dbReference>
<dbReference type="InterPro" id="IPR002100">
    <property type="entry name" value="TF_MADSbox"/>
</dbReference>
<dbReference type="InterPro" id="IPR036879">
    <property type="entry name" value="TF_MADSbox_sf"/>
</dbReference>
<dbReference type="PANTHER" id="PTHR48019">
    <property type="entry name" value="SERUM RESPONSE FACTOR HOMOLOG"/>
    <property type="match status" value="1"/>
</dbReference>
<dbReference type="Pfam" id="PF01486">
    <property type="entry name" value="K-box"/>
    <property type="match status" value="1"/>
</dbReference>
<dbReference type="Pfam" id="PF00319">
    <property type="entry name" value="SRF-TF"/>
    <property type="match status" value="1"/>
</dbReference>
<dbReference type="PRINTS" id="PR00404">
    <property type="entry name" value="MADSDOMAIN"/>
</dbReference>
<dbReference type="SMART" id="SM00432">
    <property type="entry name" value="MADS"/>
    <property type="match status" value="1"/>
</dbReference>
<dbReference type="SUPFAM" id="SSF55455">
    <property type="entry name" value="SRF-like"/>
    <property type="match status" value="1"/>
</dbReference>
<dbReference type="PROSITE" id="PS51297">
    <property type="entry name" value="K_BOX"/>
    <property type="match status" value="1"/>
</dbReference>
<dbReference type="PROSITE" id="PS00350">
    <property type="entry name" value="MADS_BOX_1"/>
    <property type="match status" value="1"/>
</dbReference>
<dbReference type="PROSITE" id="PS50066">
    <property type="entry name" value="MADS_BOX_2"/>
    <property type="match status" value="1"/>
</dbReference>
<protein>
    <recommendedName>
        <fullName evidence="7">MADS-box transcription factor 57</fullName>
    </recommendedName>
    <alternativeName>
        <fullName evidence="6">OsMADS57</fullName>
    </alternativeName>
</protein>
<comment type="function">
    <text evidence="5">Transcriptional factor that targets the CArG motif 5'-C(A/T)TTAAAAAG-3' in the promoter of D14. Directly suppresses D14 expression to control the outgrowth of axillary buds.</text>
</comment>
<comment type="subunit">
    <text evidence="5">Interacts with TB1.</text>
</comment>
<comment type="subcellular location">
    <subcellularLocation>
        <location evidence="5">Nucleus</location>
    </subcellularLocation>
</comment>
<comment type="tissue specificity">
    <text evidence="4 5">Expressed in seedling roots and shoots (PubMed:14701936). Highly expressed in young leaves (PubMed:23463009).</text>
</comment>
<comment type="disruption phenotype">
    <text evidence="5">Increased number of tillers.</text>
</comment>
<comment type="sequence caution" evidence="7">
    <conflict type="erroneous gene model prediction">
        <sequence resource="EMBL-CDS" id="BAD15933"/>
    </conflict>
</comment>